<evidence type="ECO:0000250" key="1"/>
<evidence type="ECO:0000250" key="2">
    <source>
        <dbReference type="UniProtKB" id="P02656"/>
    </source>
</evidence>
<evidence type="ECO:0000250" key="3">
    <source>
        <dbReference type="UniProtKB" id="P33622"/>
    </source>
</evidence>
<evidence type="ECO:0000269" key="4">
    <source>
    </source>
</evidence>
<evidence type="ECO:0000305" key="5"/>
<gene>
    <name type="primary">APOC3</name>
</gene>
<protein>
    <recommendedName>
        <fullName>Apolipoprotein C-III</fullName>
        <shortName>Apo-CIII</shortName>
        <shortName>ApoC-III</shortName>
    </recommendedName>
    <alternativeName>
        <fullName>Apolipoprotein C3</fullName>
    </alternativeName>
</protein>
<organism>
    <name type="scientific">Bos taurus</name>
    <name type="common">Bovine</name>
    <dbReference type="NCBI Taxonomy" id="9913"/>
    <lineage>
        <taxon>Eukaryota</taxon>
        <taxon>Metazoa</taxon>
        <taxon>Chordata</taxon>
        <taxon>Craniata</taxon>
        <taxon>Vertebrata</taxon>
        <taxon>Euteleostomi</taxon>
        <taxon>Mammalia</taxon>
        <taxon>Eutheria</taxon>
        <taxon>Laurasiatheria</taxon>
        <taxon>Artiodactyla</taxon>
        <taxon>Ruminantia</taxon>
        <taxon>Pecora</taxon>
        <taxon>Bovidae</taxon>
        <taxon>Bovinae</taxon>
        <taxon>Bos</taxon>
    </lineage>
</organism>
<feature type="signal peptide" evidence="4">
    <location>
        <begin position="1"/>
        <end position="23"/>
    </location>
</feature>
<feature type="chain" id="PRO_0000002028" description="Apolipoprotein C-III">
    <location>
        <begin position="24"/>
        <end position="96"/>
    </location>
</feature>
<feature type="region of interest" description="Lipid-binding" evidence="1">
    <location>
        <begin position="68"/>
        <end position="96"/>
    </location>
</feature>
<feature type="site" description="May interact with the LDL receptor" evidence="2">
    <location>
        <position position="41"/>
    </location>
</feature>
<feature type="modified residue" description="Methionine sulfoxide" evidence="3">
    <location>
        <position position="63"/>
    </location>
</feature>
<feature type="glycosylation site" description="O-linked (GalNAc...) threonine" evidence="2">
    <location>
        <position position="92"/>
    </location>
</feature>
<feature type="sequence conflict" description="In Ref. 3; AA sequence." evidence="5" ref="3">
    <original>S</original>
    <variation>L</variation>
    <location>
        <position position="87"/>
    </location>
</feature>
<dbReference type="EMBL" id="AB126687">
    <property type="protein sequence ID" value="BAD15291.1"/>
    <property type="molecule type" value="mRNA"/>
</dbReference>
<dbReference type="EMBL" id="BC111661">
    <property type="protein sequence ID" value="AAI11662.1"/>
    <property type="molecule type" value="mRNA"/>
</dbReference>
<dbReference type="PIR" id="S13188">
    <property type="entry name" value="S13188"/>
</dbReference>
<dbReference type="RefSeq" id="NP_001001175.1">
    <property type="nucleotide sequence ID" value="NM_001001175.2"/>
</dbReference>
<dbReference type="SMR" id="P19035"/>
<dbReference type="FunCoup" id="P19035">
    <property type="interactions" value="150"/>
</dbReference>
<dbReference type="STRING" id="9913.ENSBTAP00000016453"/>
<dbReference type="GlyCosmos" id="P19035">
    <property type="glycosylation" value="1 site, No reported glycans"/>
</dbReference>
<dbReference type="GlyGen" id="P19035">
    <property type="glycosylation" value="1 site"/>
</dbReference>
<dbReference type="PaxDb" id="9913-ENSBTAP00000016453"/>
<dbReference type="PeptideAtlas" id="P19035"/>
<dbReference type="GeneID" id="408009"/>
<dbReference type="KEGG" id="bta:408009"/>
<dbReference type="CTD" id="345"/>
<dbReference type="VEuPathDB" id="HostDB:ENSBTAG00000012398"/>
<dbReference type="eggNOG" id="ENOG502SZ00">
    <property type="taxonomic scope" value="Eukaryota"/>
</dbReference>
<dbReference type="HOGENOM" id="CLU_154694_0_0_1"/>
<dbReference type="InParanoid" id="P19035"/>
<dbReference type="OMA" id="YWSTFKG"/>
<dbReference type="OrthoDB" id="9049572at2759"/>
<dbReference type="TreeFam" id="TF338209"/>
<dbReference type="Reactome" id="R-BTA-8963888">
    <property type="pathway name" value="Chylomicron assembly"/>
</dbReference>
<dbReference type="Reactome" id="R-BTA-8963901">
    <property type="pathway name" value="Chylomicron remodeling"/>
</dbReference>
<dbReference type="Reactome" id="R-BTA-8964058">
    <property type="pathway name" value="HDL remodeling"/>
</dbReference>
<dbReference type="Reactome" id="R-BTA-975634">
    <property type="pathway name" value="Retinoid metabolism and transport"/>
</dbReference>
<dbReference type="Proteomes" id="UP000009136">
    <property type="component" value="Chromosome 15"/>
</dbReference>
<dbReference type="Bgee" id="ENSBTAG00000012398">
    <property type="expression patterns" value="Expressed in liver and 73 other cell types or tissues"/>
</dbReference>
<dbReference type="GO" id="GO:0042627">
    <property type="term" value="C:chylomicron"/>
    <property type="evidence" value="ECO:0000318"/>
    <property type="project" value="GO_Central"/>
</dbReference>
<dbReference type="GO" id="GO:0034363">
    <property type="term" value="C:intermediate-density lipoprotein particle"/>
    <property type="evidence" value="ECO:0000318"/>
    <property type="project" value="GO_Central"/>
</dbReference>
<dbReference type="GO" id="GO:0034366">
    <property type="term" value="C:spherical high-density lipoprotein particle"/>
    <property type="evidence" value="ECO:0000318"/>
    <property type="project" value="GO_Central"/>
</dbReference>
<dbReference type="GO" id="GO:0034361">
    <property type="term" value="C:very-low-density lipoprotein particle"/>
    <property type="evidence" value="ECO:0000318"/>
    <property type="project" value="GO_Central"/>
</dbReference>
<dbReference type="GO" id="GO:0070653">
    <property type="term" value="F:high-density lipoprotein particle receptor binding"/>
    <property type="evidence" value="ECO:0000318"/>
    <property type="project" value="GO_Central"/>
</dbReference>
<dbReference type="GO" id="GO:0055102">
    <property type="term" value="F:lipase inhibitor activity"/>
    <property type="evidence" value="ECO:0000318"/>
    <property type="project" value="GO_Central"/>
</dbReference>
<dbReference type="GO" id="GO:0005543">
    <property type="term" value="F:phospholipid binding"/>
    <property type="evidence" value="ECO:0000318"/>
    <property type="project" value="GO_Central"/>
</dbReference>
<dbReference type="GO" id="GO:0042632">
    <property type="term" value="P:cholesterol homeostasis"/>
    <property type="evidence" value="ECO:0000318"/>
    <property type="project" value="GO_Central"/>
</dbReference>
<dbReference type="GO" id="GO:0006869">
    <property type="term" value="P:lipid transport"/>
    <property type="evidence" value="ECO:0007669"/>
    <property type="project" value="UniProtKB-KW"/>
</dbReference>
<dbReference type="GO" id="GO:0042157">
    <property type="term" value="P:lipoprotein metabolic process"/>
    <property type="evidence" value="ECO:0007669"/>
    <property type="project" value="InterPro"/>
</dbReference>
<dbReference type="GO" id="GO:0010987">
    <property type="term" value="P:negative regulation of high-density lipoprotein particle clearance"/>
    <property type="evidence" value="ECO:0000318"/>
    <property type="project" value="GO_Central"/>
</dbReference>
<dbReference type="GO" id="GO:0010989">
    <property type="term" value="P:negative regulation of low-density lipoprotein particle clearance"/>
    <property type="evidence" value="ECO:0000318"/>
    <property type="project" value="GO_Central"/>
</dbReference>
<dbReference type="GO" id="GO:0010897">
    <property type="term" value="P:negative regulation of triglyceride catabolic process"/>
    <property type="evidence" value="ECO:0000318"/>
    <property type="project" value="GO_Central"/>
</dbReference>
<dbReference type="GO" id="GO:0010916">
    <property type="term" value="P:negative regulation of very-low-density lipoprotein particle clearance"/>
    <property type="evidence" value="ECO:0000318"/>
    <property type="project" value="GO_Central"/>
</dbReference>
<dbReference type="GO" id="GO:0019433">
    <property type="term" value="P:triglyceride catabolic process"/>
    <property type="evidence" value="ECO:0000318"/>
    <property type="project" value="GO_Central"/>
</dbReference>
<dbReference type="GO" id="GO:0070328">
    <property type="term" value="P:triglyceride homeostasis"/>
    <property type="evidence" value="ECO:0000318"/>
    <property type="project" value="GO_Central"/>
</dbReference>
<dbReference type="Gene3D" id="6.10.90.10">
    <property type="entry name" value="Apolipoprotein CIII"/>
    <property type="match status" value="1"/>
</dbReference>
<dbReference type="InterPro" id="IPR008403">
    <property type="entry name" value="Apo-CIII"/>
</dbReference>
<dbReference type="InterPro" id="IPR038195">
    <property type="entry name" value="Apo_CIII_sf"/>
</dbReference>
<dbReference type="PANTHER" id="PTHR14225">
    <property type="entry name" value="APOLIPOPROTEIN C-III"/>
    <property type="match status" value="1"/>
</dbReference>
<dbReference type="PANTHER" id="PTHR14225:SF0">
    <property type="entry name" value="APOLIPOPROTEIN C-III"/>
    <property type="match status" value="1"/>
</dbReference>
<dbReference type="Pfam" id="PF05778">
    <property type="entry name" value="Apo-CIII"/>
    <property type="match status" value="1"/>
</dbReference>
<dbReference type="SUPFAM" id="SSF47162">
    <property type="entry name" value="Apolipoprotein"/>
    <property type="match status" value="1"/>
</dbReference>
<accession>P19035</accession>
<accession>Q2M2T0</accession>
<accession>Q75T83</accession>
<proteinExistence type="evidence at protein level"/>
<reference key="1">
    <citation type="submission" date="2003-11" db="EMBL/GenBank/DDBJ databases">
        <title>Bovine apolipoprotein C-III (ApoC3) gene, complete CDS.</title>
        <authorList>
            <person name="Nitanai A."/>
            <person name="Endoh D."/>
            <person name="Oikawa S."/>
            <person name="Katoh N."/>
        </authorList>
    </citation>
    <scope>NUCLEOTIDE SEQUENCE [MRNA]</scope>
    <source>
        <tissue>Liver</tissue>
    </source>
</reference>
<reference key="2">
    <citation type="submission" date="2006-01" db="EMBL/GenBank/DDBJ databases">
        <authorList>
            <consortium name="NIH - Mammalian Gene Collection (MGC) project"/>
        </authorList>
    </citation>
    <scope>NUCLEOTIDE SEQUENCE [LARGE SCALE MRNA]</scope>
    <source>
        <strain>Hereford</strain>
        <tissue>Testis</tissue>
    </source>
</reference>
<reference key="3">
    <citation type="journal article" date="1990" name="Eur. J. Biochem.">
        <title>Primary structure of the bovine analogues to human apolipoproteins CII and CIII. Studies on isoforms and evidence for proteolytic processing.</title>
        <authorList>
            <person name="Bengtsson-Olivecrona G."/>
            <person name="Sletten K."/>
        </authorList>
    </citation>
    <scope>PROTEIN SEQUENCE OF 24-89</scope>
</reference>
<name>APOC3_BOVIN</name>
<comment type="function">
    <text evidence="2">Component of triglyceride-rich very low density lipoproteins (VLDL) and high density lipoproteins (HDL) in plasma. Plays a multifaceted role in triglyceride homeostasis. Intracellularly, promotes hepatic very low density lipoprotein 1 (VLDL1) assembly and secretion; extracellularly, attenuates hydrolysis and clearance of triglyceride-rich lipoproteins (TRLs). Impairs the lipolysis of TRLs by inhibiting lipoprotein lipase and the hepatic uptake of TRLs by remnant receptors. Formed of several curved helices connected via semiflexible hinges, so that it can wrap tightly around the curved micelle surface and easily adapt to the different diameters of its natural binding partners.</text>
</comment>
<comment type="subcellular location">
    <subcellularLocation>
        <location evidence="2">Secreted</location>
    </subcellularLocation>
</comment>
<comment type="PTM">
    <text evidence="2">The most abundant glycoforms are characterized by an O-linked disaccharide galactose linked to N-acetylgalactosamine (Gal-GalNAc), further modified with up to 3 sialic acid residues. Less abundant glycoforms are characterized by more complex and fucosylated glycan moieties. O-glycosylated on Thr-92 with a core 1 or possibly core 8 glycan.</text>
</comment>
<comment type="similarity">
    <text evidence="5">Belongs to the apolipoprotein C3 family.</text>
</comment>
<keyword id="KW-0162">Chylomicron</keyword>
<keyword id="KW-0903">Direct protein sequencing</keyword>
<keyword id="KW-0325">Glycoprotein</keyword>
<keyword id="KW-0442">Lipid degradation</keyword>
<keyword id="KW-0443">Lipid metabolism</keyword>
<keyword id="KW-0445">Lipid transport</keyword>
<keyword id="KW-0558">Oxidation</keyword>
<keyword id="KW-1185">Reference proteome</keyword>
<keyword id="KW-0964">Secreted</keyword>
<keyword id="KW-0730">Sialic acid</keyword>
<keyword id="KW-0732">Signal</keyword>
<keyword id="KW-0813">Transport</keyword>
<keyword id="KW-0850">VLDL</keyword>
<sequence>MQPRLLLLAAFLALLVLPEATKAEEGSLLDKMQGYVKEATKTAKDALSSVQESQVAQQARDWMTESFSSLKDYWSSFKGKFTDFWESATSPTQSPP</sequence>